<dbReference type="EC" id="1.14.11.55" evidence="1 2"/>
<dbReference type="EMBL" id="CP000356">
    <property type="protein sequence ID" value="ABF54657.1"/>
    <property type="molecule type" value="Genomic_DNA"/>
</dbReference>
<dbReference type="RefSeq" id="WP_011543221.1">
    <property type="nucleotide sequence ID" value="NC_008048.1"/>
</dbReference>
<dbReference type="PDB" id="4MHR">
    <property type="method" value="X-ray"/>
    <property type="resolution" value="2.10 A"/>
    <property type="chains" value="A=1-306"/>
</dbReference>
<dbReference type="PDB" id="4MHU">
    <property type="method" value="X-ray"/>
    <property type="resolution" value="2.56 A"/>
    <property type="chains" value="A/B=1-306"/>
</dbReference>
<dbReference type="PDB" id="4Q5O">
    <property type="method" value="X-ray"/>
    <property type="resolution" value="2.64 A"/>
    <property type="chains" value="A/B=1-306"/>
</dbReference>
<dbReference type="PDBsum" id="4MHR"/>
<dbReference type="PDBsum" id="4MHU"/>
<dbReference type="PDBsum" id="4Q5O"/>
<dbReference type="SMR" id="Q1GNW5"/>
<dbReference type="STRING" id="317655.Sala_2952"/>
<dbReference type="KEGG" id="sal:Sala_2952"/>
<dbReference type="eggNOG" id="COG5285">
    <property type="taxonomic scope" value="Bacteria"/>
</dbReference>
<dbReference type="HOGENOM" id="CLU_048953_5_0_5"/>
<dbReference type="OrthoDB" id="9791262at2"/>
<dbReference type="BRENDA" id="1.14.11.55">
    <property type="organism ID" value="12995"/>
</dbReference>
<dbReference type="EvolutionaryTrace" id="Q1GNW5"/>
<dbReference type="Proteomes" id="UP000006578">
    <property type="component" value="Chromosome"/>
</dbReference>
<dbReference type="GO" id="GO:0016706">
    <property type="term" value="F:2-oxoglutarate-dependent dioxygenase activity"/>
    <property type="evidence" value="ECO:0000314"/>
    <property type="project" value="UniProtKB"/>
</dbReference>
<dbReference type="GO" id="GO:0005506">
    <property type="term" value="F:iron ion binding"/>
    <property type="evidence" value="ECO:0000314"/>
    <property type="project" value="UniProtKB"/>
</dbReference>
<dbReference type="FunFam" id="2.60.120.620:FF:000016">
    <property type="entry name" value="Ectoine hydroxylase"/>
    <property type="match status" value="1"/>
</dbReference>
<dbReference type="Gene3D" id="2.60.120.620">
    <property type="entry name" value="q2cbj1_9rhob like domain"/>
    <property type="match status" value="1"/>
</dbReference>
<dbReference type="InterPro" id="IPR012774">
    <property type="entry name" value="EctD"/>
</dbReference>
<dbReference type="InterPro" id="IPR008775">
    <property type="entry name" value="Phytyl_CoA_dOase-like"/>
</dbReference>
<dbReference type="NCBIfam" id="TIGR02408">
    <property type="entry name" value="ectoine_ThpD"/>
    <property type="match status" value="1"/>
</dbReference>
<dbReference type="PANTHER" id="PTHR20883:SF48">
    <property type="entry name" value="ECTOINE DIOXYGENASE"/>
    <property type="match status" value="1"/>
</dbReference>
<dbReference type="PANTHER" id="PTHR20883">
    <property type="entry name" value="PHYTANOYL-COA DIOXYGENASE DOMAIN CONTAINING 1"/>
    <property type="match status" value="1"/>
</dbReference>
<dbReference type="Pfam" id="PF05721">
    <property type="entry name" value="PhyH"/>
    <property type="match status" value="1"/>
</dbReference>
<dbReference type="SUPFAM" id="SSF51197">
    <property type="entry name" value="Clavaminate synthase-like"/>
    <property type="match status" value="1"/>
</dbReference>
<feature type="chain" id="PRO_0000445004" description="Ectoine dioxygenase">
    <location>
        <begin position="1"/>
        <end position="306"/>
    </location>
</feature>
<feature type="binding site" evidence="5 9">
    <location>
        <position position="127"/>
    </location>
    <ligand>
        <name>L-ectoine</name>
        <dbReference type="ChEBI" id="CHEBI:58515"/>
    </ligand>
</feature>
<feature type="binding site" evidence="2 9">
    <location>
        <position position="133"/>
    </location>
    <ligand>
        <name>2-oxoglutarate</name>
        <dbReference type="ChEBI" id="CHEBI:16810"/>
    </ligand>
</feature>
<feature type="binding site" evidence="2 8 9">
    <location>
        <position position="144"/>
    </location>
    <ligand>
        <name>Fe cation</name>
        <dbReference type="ChEBI" id="CHEBI:24875"/>
    </ligand>
</feature>
<feature type="binding site" evidence="2 8 9">
    <location>
        <position position="146"/>
    </location>
    <ligand>
        <name>Fe cation</name>
        <dbReference type="ChEBI" id="CHEBI:24875"/>
    </ligand>
</feature>
<feature type="binding site" evidence="2 8 9">
    <location>
        <position position="245"/>
    </location>
    <ligand>
        <name>Fe cation</name>
        <dbReference type="ChEBI" id="CHEBI:24875"/>
    </ligand>
</feature>
<feature type="site" description="Important for ectoine stabilization" evidence="2">
    <location>
        <position position="150"/>
    </location>
</feature>
<feature type="mutagenesis site" description="Loss of dioxygenase activity." evidence="2">
    <original>Q</original>
    <variation>A</variation>
    <location>
        <position position="127"/>
    </location>
</feature>
<feature type="mutagenesis site" description="No effect on the dioxygenase activity and on the dimerization." evidence="2">
    <original>RE</original>
    <variation>AA</variation>
    <location>
        <begin position="139"/>
        <end position="140"/>
    </location>
</feature>
<feature type="mutagenesis site" description="Strong reduction in the production of 5-hydroxyectoine." evidence="2">
    <original>T</original>
    <variation>A</variation>
    <location>
        <position position="149"/>
    </location>
</feature>
<feature type="mutagenesis site" description="Loss of dioxygenase activity." evidence="2">
    <original>W</original>
    <variation>A</variation>
    <location>
        <position position="150"/>
    </location>
</feature>
<feature type="mutagenesis site" description="Strong reduction in the production of 5-hydroxyectoine." evidence="2">
    <original>R</original>
    <variation>A</variation>
    <location>
        <position position="280"/>
    </location>
</feature>
<feature type="strand" evidence="10">
    <location>
        <begin position="8"/>
        <end position="12"/>
    </location>
</feature>
<feature type="strand" evidence="10">
    <location>
        <begin position="15"/>
        <end position="17"/>
    </location>
</feature>
<feature type="strand" evidence="10">
    <location>
        <begin position="31"/>
        <end position="33"/>
    </location>
</feature>
<feature type="helix" evidence="10">
    <location>
        <begin position="35"/>
        <end position="44"/>
    </location>
</feature>
<feature type="strand" evidence="10">
    <location>
        <begin position="45"/>
        <end position="49"/>
    </location>
</feature>
<feature type="helix" evidence="10">
    <location>
        <begin position="55"/>
        <end position="70"/>
    </location>
</feature>
<feature type="helix" evidence="10">
    <location>
        <begin position="72"/>
        <end position="74"/>
    </location>
</feature>
<feature type="helix" evidence="10">
    <location>
        <begin position="77"/>
        <end position="79"/>
    </location>
</feature>
<feature type="strand" evidence="10">
    <location>
        <begin position="80"/>
        <end position="82"/>
    </location>
</feature>
<feature type="strand" evidence="11">
    <location>
        <begin position="84"/>
        <end position="86"/>
    </location>
</feature>
<feature type="strand" evidence="10">
    <location>
        <begin position="89"/>
        <end position="93"/>
    </location>
</feature>
<feature type="helix" evidence="10">
    <location>
        <begin position="95"/>
        <end position="98"/>
    </location>
</feature>
<feature type="helix" evidence="10">
    <location>
        <begin position="100"/>
        <end position="107"/>
    </location>
</feature>
<feature type="helix" evidence="10">
    <location>
        <begin position="109"/>
        <end position="119"/>
    </location>
</feature>
<feature type="strand" evidence="10">
    <location>
        <begin position="123"/>
        <end position="133"/>
    </location>
</feature>
<feature type="strand" evidence="10">
    <location>
        <begin position="135"/>
        <end position="138"/>
    </location>
</feature>
<feature type="strand" evidence="10">
    <location>
        <begin position="141"/>
        <end position="144"/>
    </location>
</feature>
<feature type="helix" evidence="10">
    <location>
        <begin position="146"/>
        <end position="154"/>
    </location>
</feature>
<feature type="strand" evidence="10">
    <location>
        <begin position="161"/>
        <end position="169"/>
    </location>
</feature>
<feature type="strand" evidence="10">
    <location>
        <begin position="173"/>
        <end position="175"/>
    </location>
</feature>
<feature type="helix" evidence="10">
    <location>
        <begin position="184"/>
        <end position="186"/>
    </location>
</feature>
<feature type="strand" evidence="10">
    <location>
        <begin position="187"/>
        <end position="189"/>
    </location>
</feature>
<feature type="helix" evidence="10">
    <location>
        <begin position="214"/>
        <end position="224"/>
    </location>
</feature>
<feature type="strand" evidence="10">
    <location>
        <begin position="236"/>
        <end position="240"/>
    </location>
</feature>
<feature type="strand" evidence="10">
    <location>
        <begin position="245"/>
        <end position="247"/>
    </location>
</feature>
<feature type="strand" evidence="10">
    <location>
        <begin position="256"/>
        <end position="265"/>
    </location>
</feature>
<feature type="helix" evidence="10">
    <location>
        <begin position="266"/>
        <end position="268"/>
    </location>
</feature>
<feature type="strand" evidence="12">
    <location>
        <begin position="274"/>
        <end position="277"/>
    </location>
</feature>
<feature type="helix" evidence="10">
    <location>
        <begin position="282"/>
        <end position="284"/>
    </location>
</feature>
<organism>
    <name type="scientific">Sphingopyxis alaskensis (strain DSM 13593 / LMG 18877 / RB2256)</name>
    <name type="common">Sphingomonas alaskensis</name>
    <dbReference type="NCBI Taxonomy" id="317655"/>
    <lineage>
        <taxon>Bacteria</taxon>
        <taxon>Pseudomonadati</taxon>
        <taxon>Pseudomonadota</taxon>
        <taxon>Alphaproteobacteria</taxon>
        <taxon>Sphingomonadales</taxon>
        <taxon>Sphingomonadaceae</taxon>
        <taxon>Sphingopyxis</taxon>
    </lineage>
</organism>
<evidence type="ECO:0000269" key="1">
    <source>
    </source>
</evidence>
<evidence type="ECO:0000269" key="2">
    <source>
    </source>
</evidence>
<evidence type="ECO:0000303" key="3">
    <source>
    </source>
</evidence>
<evidence type="ECO:0000305" key="4"/>
<evidence type="ECO:0000305" key="5">
    <source>
    </source>
</evidence>
<evidence type="ECO:0000312" key="6">
    <source>
        <dbReference type="EMBL" id="ABF54657.1"/>
    </source>
</evidence>
<evidence type="ECO:0000312" key="7">
    <source>
        <dbReference type="Proteomes" id="UP000006578"/>
    </source>
</evidence>
<evidence type="ECO:0007744" key="8">
    <source>
        <dbReference type="PDB" id="4MHU"/>
    </source>
</evidence>
<evidence type="ECO:0007744" key="9">
    <source>
        <dbReference type="PDB" id="4Q5O"/>
    </source>
</evidence>
<evidence type="ECO:0007829" key="10">
    <source>
        <dbReference type="PDB" id="4MHR"/>
    </source>
</evidence>
<evidence type="ECO:0007829" key="11">
    <source>
        <dbReference type="PDB" id="4MHU"/>
    </source>
</evidence>
<evidence type="ECO:0007829" key="12">
    <source>
        <dbReference type="PDB" id="4Q5O"/>
    </source>
</evidence>
<gene>
    <name evidence="3" type="primary">ectD</name>
    <name evidence="6" type="ordered locus">Sala_2952</name>
</gene>
<sequence length="306" mass="34140">MQDLYPSRQRADAEMRPRLDPVVHSEWTNDAPISARQAAAFDRDGYIVLEDIFSADEVAFLQKAAGNLLADPAALDADTIVTEPQSNEIRSIFEIHAQSPVMARLAADARLADVARFLLGDEVYIHQSRLNYKPGFKGREFYWHSDFETWHVEDGMPRMRALSMSVLLAENTPHNGPLMVIPGSHRTYLTCVGETPDDHYLSSLKKQEYGVPDEESLAELAHRHGIVAPTGKPGTVILFDCNLMHGSNGNITPFPRANAFLVYNAVSNRLEKPFGVEKPRPWFLARRGEPAALRVERGPLVETVPA</sequence>
<protein>
    <recommendedName>
        <fullName evidence="3">Ectoine dioxygenase</fullName>
        <ecNumber evidence="1 2">1.14.11.55</ecNumber>
    </recommendedName>
    <alternativeName>
        <fullName evidence="3">Ectoine hydroxylase</fullName>
    </alternativeName>
</protein>
<comment type="function">
    <text evidence="1 2">Involved in the biosynthesis of 5-hydroxyectoine, called compatible solute, which helps organisms to survive extreme osmotic stress by acting as a highly soluble organic osmolyte. Catalyzes the 2-oxoglutarate-dependent selective hydroxylation of L-ectoine to yield (4S,5S)-5-hydroxyectoine.</text>
</comment>
<comment type="catalytic activity">
    <reaction evidence="1 2">
        <text>L-ectoine + 2-oxoglutarate + O2 = 5-hydroxyectoine + succinate + CO2</text>
        <dbReference type="Rhea" id="RHEA:45740"/>
        <dbReference type="ChEBI" id="CHEBI:15379"/>
        <dbReference type="ChEBI" id="CHEBI:16526"/>
        <dbReference type="ChEBI" id="CHEBI:16810"/>
        <dbReference type="ChEBI" id="CHEBI:30031"/>
        <dbReference type="ChEBI" id="CHEBI:58515"/>
        <dbReference type="ChEBI" id="CHEBI:85413"/>
        <dbReference type="EC" id="1.14.11.55"/>
    </reaction>
</comment>
<comment type="cofactor">
    <cofactor evidence="1 2">
        <name>Fe(2+)</name>
        <dbReference type="ChEBI" id="CHEBI:29033"/>
    </cofactor>
    <text evidence="1 2">Binds 1 Fe(2+) ion.</text>
</comment>
<comment type="biophysicochemical properties">
    <kinetics>
        <KM evidence="1">2.7 mM for 2-oxoglutarate (at pH 8 and 40 degrees Celsius)</KM>
        <KM evidence="1">9.8 mM for ectoine (at pH 8 and 40 degrees Celsius)</KM>
        <Vmax evidence="1">1.0 umol/min/mg enzyme (at pH 8 and 40 degrees Celsius)</Vmax>
        <text evidence="1">kcat is 1.2 sec(-1) for ectoin as substrate (at pH 8 and 40 degrees Celsius).</text>
    </kinetics>
    <phDependence>
        <text evidence="1">Optimum pH is 8.</text>
    </phDependence>
    <temperatureDependence>
        <text evidence="1">Optimum temperature is 40 degrees Celsius (PubMed:24714029). Active from 5 to 50 degrees Celsius (PubMed:24714029).</text>
    </temperatureDependence>
</comment>
<comment type="subunit">
    <text evidence="1 2">Homodimer.</text>
</comment>
<comment type="similarity">
    <text evidence="4">Belongs to the PhyH family. EctD subfamily.</text>
</comment>
<proteinExistence type="evidence at protein level"/>
<reference key="1">
    <citation type="journal article" date="2009" name="Proc. Natl. Acad. Sci. U.S.A.">
        <title>The genomic basis of trophic strategy in marine bacteria.</title>
        <authorList>
            <person name="Lauro F.M."/>
            <person name="McDougald D."/>
            <person name="Thomas T."/>
            <person name="Williams T.J."/>
            <person name="Egan S."/>
            <person name="Rice S."/>
            <person name="DeMaere M.Z."/>
            <person name="Ting L."/>
            <person name="Ertan H."/>
            <person name="Johnson J."/>
            <person name="Ferriera S."/>
            <person name="Lapidus A."/>
            <person name="Anderson I."/>
            <person name="Kyrpides N."/>
            <person name="Munk A.C."/>
            <person name="Detter C."/>
            <person name="Han C.S."/>
            <person name="Brown M.V."/>
            <person name="Robb F.T."/>
            <person name="Kjelleberg S."/>
            <person name="Cavicchioli R."/>
        </authorList>
    </citation>
    <scope>NUCLEOTIDE SEQUENCE [LARGE SCALE GENOMIC DNA]</scope>
    <source>
        <strain evidence="7">DSM 13593 / LMG 18877 / RB2256</strain>
    </source>
</reference>
<reference key="2">
    <citation type="journal article" date="2014" name="PLoS ONE">
        <title>Biochemical properties of ectoine hydroxylases from extremophiles and their wider taxonomic distribution among microorganisms.</title>
        <authorList>
            <person name="Widderich N."/>
            <person name="Hoppner A."/>
            <person name="Pittelkow M."/>
            <person name="Heider J."/>
            <person name="Smits S.H."/>
            <person name="Bremer E."/>
        </authorList>
    </citation>
    <scope>FUNCTION</scope>
    <scope>CATALYTIC ACTIVITY</scope>
    <scope>BIOPHYSICOCHEMICAL PROPERTIES</scope>
    <scope>COFACTOR</scope>
    <scope>SUBUNIT</scope>
</reference>
<reference key="3">
    <citation type="journal article" date="2014" name="J. Biol. Chem.">
        <title>Crystal structure of the ectoine hydroxylase, a snapshot of the active site.</title>
        <authorList>
            <person name="Hoppner A."/>
            <person name="Widderich N."/>
            <person name="Lenders M."/>
            <person name="Bremer E."/>
            <person name="Smits S.H."/>
        </authorList>
    </citation>
    <scope>X-RAY CRYSTALLOGRAPHY (2.10 ANGSTROMS) IN COMPLEX WITH IRON ION; 2-OXOGLUTARATE AND SUBSTRATE ANALOG</scope>
    <scope>FUNCTION</scope>
    <scope>CATALYTIC ACTIVITY</scope>
    <scope>MUTAGENESIS OF GLN-127; 139-ARG-GLU-140; THR-149; TRP-150 AND ARG-280</scope>
    <scope>COFACTOR</scope>
    <scope>SUBUNIT</scope>
</reference>
<keyword id="KW-0002">3D-structure</keyword>
<keyword id="KW-0223">Dioxygenase</keyword>
<keyword id="KW-0408">Iron</keyword>
<keyword id="KW-0479">Metal-binding</keyword>
<keyword id="KW-0560">Oxidoreductase</keyword>
<keyword id="KW-1185">Reference proteome</keyword>
<name>ECTD_SPHAL</name>
<accession>Q1GNW5</accession>